<dbReference type="EMBL" id="AAFI02000105">
    <property type="protein sequence ID" value="EAL63475.1"/>
    <property type="molecule type" value="Genomic_DNA"/>
</dbReference>
<dbReference type="RefSeq" id="XP_636982.1">
    <property type="nucleotide sequence ID" value="XM_631890.1"/>
</dbReference>
<dbReference type="SMR" id="Q54JN0"/>
<dbReference type="FunCoup" id="Q54JN0">
    <property type="interactions" value="839"/>
</dbReference>
<dbReference type="STRING" id="44689.Q54JN0"/>
<dbReference type="PaxDb" id="44689-DDB0238376"/>
<dbReference type="EnsemblProtists" id="EAL63475">
    <property type="protein sequence ID" value="EAL63475"/>
    <property type="gene ID" value="DDB_G0287937"/>
</dbReference>
<dbReference type="GeneID" id="8626376"/>
<dbReference type="KEGG" id="ddi:DDB_G0287937"/>
<dbReference type="dictyBase" id="DDB_G0287937">
    <property type="gene designation" value="bxdc2"/>
</dbReference>
<dbReference type="VEuPathDB" id="AmoebaDB:DDB_G0287937"/>
<dbReference type="eggNOG" id="KOG2971">
    <property type="taxonomic scope" value="Eukaryota"/>
</dbReference>
<dbReference type="HOGENOM" id="CLU_048373_3_0_1"/>
<dbReference type="InParanoid" id="Q54JN0"/>
<dbReference type="OMA" id="YMWLANA"/>
<dbReference type="PhylomeDB" id="Q54JN0"/>
<dbReference type="PRO" id="PR:Q54JN0"/>
<dbReference type="Proteomes" id="UP000002195">
    <property type="component" value="Chromosome 5"/>
</dbReference>
<dbReference type="GO" id="GO:0005730">
    <property type="term" value="C:nucleolus"/>
    <property type="evidence" value="ECO:0000250"/>
    <property type="project" value="dictyBase"/>
</dbReference>
<dbReference type="GO" id="GO:0003723">
    <property type="term" value="F:RNA binding"/>
    <property type="evidence" value="ECO:0000318"/>
    <property type="project" value="GO_Central"/>
</dbReference>
<dbReference type="GO" id="GO:0042134">
    <property type="term" value="F:rRNA primary transcript binding"/>
    <property type="evidence" value="ECO:0000250"/>
    <property type="project" value="dictyBase"/>
</dbReference>
<dbReference type="GO" id="GO:0000027">
    <property type="term" value="P:ribosomal large subunit assembly"/>
    <property type="evidence" value="ECO:0000250"/>
    <property type="project" value="dictyBase"/>
</dbReference>
<dbReference type="GO" id="GO:0006364">
    <property type="term" value="P:rRNA processing"/>
    <property type="evidence" value="ECO:0007669"/>
    <property type="project" value="InterPro"/>
</dbReference>
<dbReference type="FunFam" id="3.40.50.10480:FF:000009">
    <property type="entry name" value="Ribosome biogenesis protein, putative"/>
    <property type="match status" value="1"/>
</dbReference>
<dbReference type="Gene3D" id="3.40.50.10480">
    <property type="entry name" value="Probable brix-domain ribosomal biogenesis protein"/>
    <property type="match status" value="1"/>
</dbReference>
<dbReference type="InterPro" id="IPR007109">
    <property type="entry name" value="Brix"/>
</dbReference>
<dbReference type="InterPro" id="IPR026532">
    <property type="entry name" value="BRX1"/>
</dbReference>
<dbReference type="PANTHER" id="PTHR13634">
    <property type="entry name" value="RIBOSOME BIOGENESIS PROTEIN BRIX"/>
    <property type="match status" value="1"/>
</dbReference>
<dbReference type="PANTHER" id="PTHR13634:SF0">
    <property type="entry name" value="RIBOSOME BIOGENESIS PROTEIN BRX1 HOMOLOG"/>
    <property type="match status" value="1"/>
</dbReference>
<dbReference type="Pfam" id="PF04427">
    <property type="entry name" value="Brix"/>
    <property type="match status" value="1"/>
</dbReference>
<dbReference type="SMART" id="SM00879">
    <property type="entry name" value="Brix"/>
    <property type="match status" value="1"/>
</dbReference>
<dbReference type="SUPFAM" id="SSF52954">
    <property type="entry name" value="Class II aaRS ABD-related"/>
    <property type="match status" value="1"/>
</dbReference>
<dbReference type="PROSITE" id="PS50833">
    <property type="entry name" value="BRIX"/>
    <property type="match status" value="1"/>
</dbReference>
<organism>
    <name type="scientific">Dictyostelium discoideum</name>
    <name type="common">Social amoeba</name>
    <dbReference type="NCBI Taxonomy" id="44689"/>
    <lineage>
        <taxon>Eukaryota</taxon>
        <taxon>Amoebozoa</taxon>
        <taxon>Evosea</taxon>
        <taxon>Eumycetozoa</taxon>
        <taxon>Dictyostelia</taxon>
        <taxon>Dictyosteliales</taxon>
        <taxon>Dictyosteliaceae</taxon>
        <taxon>Dictyostelium</taxon>
    </lineage>
</organism>
<comment type="function">
    <text evidence="1">Required for biogenesis of the 60S ribosomal subunit.</text>
</comment>
<comment type="subcellular location">
    <subcellularLocation>
        <location evidence="1">Nucleus</location>
        <location evidence="1">Nucleolus</location>
    </subcellularLocation>
</comment>
<comment type="similarity">
    <text evidence="4">Belongs to the BRX1 family.</text>
</comment>
<feature type="chain" id="PRO_0000327887" description="Ribosome biogenesis protein BRX1 homolog">
    <location>
        <begin position="1"/>
        <end position="326"/>
    </location>
</feature>
<feature type="domain" description="Brix" evidence="2">
    <location>
        <begin position="75"/>
        <end position="268"/>
    </location>
</feature>
<feature type="region of interest" description="Disordered" evidence="3">
    <location>
        <begin position="1"/>
        <end position="66"/>
    </location>
</feature>
<feature type="compositionally biased region" description="Basic and acidic residues" evidence="3">
    <location>
        <begin position="1"/>
        <end position="17"/>
    </location>
</feature>
<feature type="compositionally biased region" description="Acidic residues" evidence="3">
    <location>
        <begin position="22"/>
        <end position="57"/>
    </location>
</feature>
<gene>
    <name type="primary">bxdc2</name>
    <name type="ORF">DDB_G0287937</name>
</gene>
<keyword id="KW-0539">Nucleus</keyword>
<keyword id="KW-1185">Reference proteome</keyword>
<keyword id="KW-0690">Ribosome biogenesis</keyword>
<protein>
    <recommendedName>
        <fullName>Ribosome biogenesis protein BRX1 homolog</fullName>
    </recommendedName>
    <alternativeName>
        <fullName>Brix domain-containing protein 2 homolog</fullName>
    </alternativeName>
</protein>
<evidence type="ECO:0000250" key="1"/>
<evidence type="ECO:0000255" key="2">
    <source>
        <dbReference type="PROSITE-ProRule" id="PRU00034"/>
    </source>
</evidence>
<evidence type="ECO:0000256" key="3">
    <source>
        <dbReference type="SAM" id="MobiDB-lite"/>
    </source>
</evidence>
<evidence type="ECO:0000305" key="4"/>
<reference key="1">
    <citation type="journal article" date="2005" name="Nature">
        <title>The genome of the social amoeba Dictyostelium discoideum.</title>
        <authorList>
            <person name="Eichinger L."/>
            <person name="Pachebat J.A."/>
            <person name="Gloeckner G."/>
            <person name="Rajandream M.A."/>
            <person name="Sucgang R."/>
            <person name="Berriman M."/>
            <person name="Song J."/>
            <person name="Olsen R."/>
            <person name="Szafranski K."/>
            <person name="Xu Q."/>
            <person name="Tunggal B."/>
            <person name="Kummerfeld S."/>
            <person name="Madera M."/>
            <person name="Konfortov B.A."/>
            <person name="Rivero F."/>
            <person name="Bankier A.T."/>
            <person name="Lehmann R."/>
            <person name="Hamlin N."/>
            <person name="Davies R."/>
            <person name="Gaudet P."/>
            <person name="Fey P."/>
            <person name="Pilcher K."/>
            <person name="Chen G."/>
            <person name="Saunders D."/>
            <person name="Sodergren E.J."/>
            <person name="Davis P."/>
            <person name="Kerhornou A."/>
            <person name="Nie X."/>
            <person name="Hall N."/>
            <person name="Anjard C."/>
            <person name="Hemphill L."/>
            <person name="Bason N."/>
            <person name="Farbrother P."/>
            <person name="Desany B."/>
            <person name="Just E."/>
            <person name="Morio T."/>
            <person name="Rost R."/>
            <person name="Churcher C.M."/>
            <person name="Cooper J."/>
            <person name="Haydock S."/>
            <person name="van Driessche N."/>
            <person name="Cronin A."/>
            <person name="Goodhead I."/>
            <person name="Muzny D.M."/>
            <person name="Mourier T."/>
            <person name="Pain A."/>
            <person name="Lu M."/>
            <person name="Harper D."/>
            <person name="Lindsay R."/>
            <person name="Hauser H."/>
            <person name="James K.D."/>
            <person name="Quiles M."/>
            <person name="Madan Babu M."/>
            <person name="Saito T."/>
            <person name="Buchrieser C."/>
            <person name="Wardroper A."/>
            <person name="Felder M."/>
            <person name="Thangavelu M."/>
            <person name="Johnson D."/>
            <person name="Knights A."/>
            <person name="Loulseged H."/>
            <person name="Mungall K.L."/>
            <person name="Oliver K."/>
            <person name="Price C."/>
            <person name="Quail M.A."/>
            <person name="Urushihara H."/>
            <person name="Hernandez J."/>
            <person name="Rabbinowitsch E."/>
            <person name="Steffen D."/>
            <person name="Sanders M."/>
            <person name="Ma J."/>
            <person name="Kohara Y."/>
            <person name="Sharp S."/>
            <person name="Simmonds M.N."/>
            <person name="Spiegler S."/>
            <person name="Tivey A."/>
            <person name="Sugano S."/>
            <person name="White B."/>
            <person name="Walker D."/>
            <person name="Woodward J.R."/>
            <person name="Winckler T."/>
            <person name="Tanaka Y."/>
            <person name="Shaulsky G."/>
            <person name="Schleicher M."/>
            <person name="Weinstock G.M."/>
            <person name="Rosenthal A."/>
            <person name="Cox E.C."/>
            <person name="Chisholm R.L."/>
            <person name="Gibbs R.A."/>
            <person name="Loomis W.F."/>
            <person name="Platzer M."/>
            <person name="Kay R.R."/>
            <person name="Williams J.G."/>
            <person name="Dear P.H."/>
            <person name="Noegel A.A."/>
            <person name="Barrell B.G."/>
            <person name="Kuspa A."/>
        </authorList>
    </citation>
    <scope>NUCLEOTIDE SEQUENCE [LARGE SCALE GENOMIC DNA]</scope>
    <source>
        <strain>AX4</strain>
    </source>
</reference>
<name>BRX1_DICDI</name>
<accession>Q54JN0</accession>
<sequence length="326" mass="38054">MVKPSKILEKIKKRTEPVAEPVVEEESDEEIIEQEGSEEEEEIVEEESEEEEEEVEEENKNIEENKKDQSIYTKKRVLFTSTRGIGSKYRHLMADLISLIPHSKKEDKIDDRKTLSLINETCEMKSCNYAILFDVRKGTDCFLWMAKTPLGPTVKFHITNVHTLDELQMTGNCLKGSRPFLHFDKSFDSEVHLQLIKELITQIYSTPKGHVKSKPFFDHVFSFFYQDGRIWFRNYQISDQEFKKDSLLTEIGPRMIMHIDKIFSDGFGGSVLYSNPNYVSPNNTRSDHKLSKANKYIKRKYQKGKAEERQKISFIEPSEVDTVFDN</sequence>
<proteinExistence type="inferred from homology"/>